<proteinExistence type="inferred from homology"/>
<comment type="function">
    <text evidence="1">One of the primary rRNA binding proteins. Required for association of the 30S and 50S subunits to form the 70S ribosome, for tRNA binding and peptide bond formation. It has been suggested to have peptidyltransferase activity; this is somewhat controversial. Makes several contacts with the 16S rRNA in the 70S ribosome.</text>
</comment>
<comment type="subunit">
    <text evidence="1">Part of the 50S ribosomal subunit. Forms a bridge to the 30S subunit in the 70S ribosome.</text>
</comment>
<comment type="similarity">
    <text evidence="1">Belongs to the universal ribosomal protein uL2 family.</text>
</comment>
<organism>
    <name type="scientific">Acidovorax sp. (strain JS42)</name>
    <dbReference type="NCBI Taxonomy" id="232721"/>
    <lineage>
        <taxon>Bacteria</taxon>
        <taxon>Pseudomonadati</taxon>
        <taxon>Pseudomonadota</taxon>
        <taxon>Betaproteobacteria</taxon>
        <taxon>Burkholderiales</taxon>
        <taxon>Comamonadaceae</taxon>
        <taxon>Acidovorax</taxon>
    </lineage>
</organism>
<protein>
    <recommendedName>
        <fullName evidence="1">Large ribosomal subunit protein uL2</fullName>
    </recommendedName>
    <alternativeName>
        <fullName evidence="3">50S ribosomal protein L2</fullName>
    </alternativeName>
</protein>
<feature type="chain" id="PRO_0000309860" description="Large ribosomal subunit protein uL2">
    <location>
        <begin position="1"/>
        <end position="274"/>
    </location>
</feature>
<feature type="region of interest" description="Disordered" evidence="2">
    <location>
        <begin position="224"/>
        <end position="256"/>
    </location>
</feature>
<feature type="compositionally biased region" description="Basic and acidic residues" evidence="2">
    <location>
        <begin position="229"/>
        <end position="246"/>
    </location>
</feature>
<reference key="1">
    <citation type="submission" date="2006-12" db="EMBL/GenBank/DDBJ databases">
        <title>Complete sequence of chromosome 1 of Acidovorax sp. JS42.</title>
        <authorList>
            <person name="Copeland A."/>
            <person name="Lucas S."/>
            <person name="Lapidus A."/>
            <person name="Barry K."/>
            <person name="Detter J.C."/>
            <person name="Glavina del Rio T."/>
            <person name="Dalin E."/>
            <person name="Tice H."/>
            <person name="Pitluck S."/>
            <person name="Chertkov O."/>
            <person name="Brettin T."/>
            <person name="Bruce D."/>
            <person name="Han C."/>
            <person name="Tapia R."/>
            <person name="Gilna P."/>
            <person name="Schmutz J."/>
            <person name="Larimer F."/>
            <person name="Land M."/>
            <person name="Hauser L."/>
            <person name="Kyrpides N."/>
            <person name="Kim E."/>
            <person name="Stahl D."/>
            <person name="Richardson P."/>
        </authorList>
    </citation>
    <scope>NUCLEOTIDE SEQUENCE [LARGE SCALE GENOMIC DNA]</scope>
    <source>
        <strain>JS42</strain>
    </source>
</reference>
<sequence>MAVIKIKPTSPGQRGAVKISRDHLYKGEAFAGLLEPQFQKAGRNNNGHITTRHKGGGHKHHYRVVDFRRNKDAIPAKVERIEYDPNRTAHIALVCYADGERRYIIAPRNLEVGATIVSGSEAPIRVGNTLPIRNIPVGSTIHCIELKPGAGAQIARSAGTSATLLAREGVYAQVRMRSGEVRKIHIECRATIGEVANEEHSLRQLGKAGVKRWMGIRPTVRGVAMNPIDHPHGGGEGRTGEGRHAVDPWGNLTKGYRTRNNKRTQVMIVSRRKK</sequence>
<evidence type="ECO:0000255" key="1">
    <source>
        <dbReference type="HAMAP-Rule" id="MF_01320"/>
    </source>
</evidence>
<evidence type="ECO:0000256" key="2">
    <source>
        <dbReference type="SAM" id="MobiDB-lite"/>
    </source>
</evidence>
<evidence type="ECO:0000305" key="3"/>
<name>RL2_ACISJ</name>
<keyword id="KW-0687">Ribonucleoprotein</keyword>
<keyword id="KW-0689">Ribosomal protein</keyword>
<keyword id="KW-0694">RNA-binding</keyword>
<keyword id="KW-0699">rRNA-binding</keyword>
<accession>A1W2R0</accession>
<gene>
    <name evidence="1" type="primary">rplB</name>
    <name type="ordered locus">Ajs_0281</name>
</gene>
<dbReference type="EMBL" id="CP000539">
    <property type="protein sequence ID" value="ABM40535.1"/>
    <property type="molecule type" value="Genomic_DNA"/>
</dbReference>
<dbReference type="RefSeq" id="WP_011803745.1">
    <property type="nucleotide sequence ID" value="NZ_CP016278.1"/>
</dbReference>
<dbReference type="SMR" id="A1W2R0"/>
<dbReference type="STRING" id="232721.Ajs_0281"/>
<dbReference type="GeneID" id="84683209"/>
<dbReference type="KEGG" id="ajs:Ajs_0281"/>
<dbReference type="eggNOG" id="COG0090">
    <property type="taxonomic scope" value="Bacteria"/>
</dbReference>
<dbReference type="HOGENOM" id="CLU_036235_2_1_4"/>
<dbReference type="Proteomes" id="UP000000645">
    <property type="component" value="Chromosome"/>
</dbReference>
<dbReference type="GO" id="GO:0015934">
    <property type="term" value="C:large ribosomal subunit"/>
    <property type="evidence" value="ECO:0007669"/>
    <property type="project" value="InterPro"/>
</dbReference>
<dbReference type="GO" id="GO:0019843">
    <property type="term" value="F:rRNA binding"/>
    <property type="evidence" value="ECO:0007669"/>
    <property type="project" value="UniProtKB-UniRule"/>
</dbReference>
<dbReference type="GO" id="GO:0003735">
    <property type="term" value="F:structural constituent of ribosome"/>
    <property type="evidence" value="ECO:0007669"/>
    <property type="project" value="InterPro"/>
</dbReference>
<dbReference type="GO" id="GO:0016740">
    <property type="term" value="F:transferase activity"/>
    <property type="evidence" value="ECO:0007669"/>
    <property type="project" value="InterPro"/>
</dbReference>
<dbReference type="GO" id="GO:0002181">
    <property type="term" value="P:cytoplasmic translation"/>
    <property type="evidence" value="ECO:0007669"/>
    <property type="project" value="TreeGrafter"/>
</dbReference>
<dbReference type="FunFam" id="2.30.30.30:FF:000001">
    <property type="entry name" value="50S ribosomal protein L2"/>
    <property type="match status" value="1"/>
</dbReference>
<dbReference type="FunFam" id="2.40.50.140:FF:000003">
    <property type="entry name" value="50S ribosomal protein L2"/>
    <property type="match status" value="1"/>
</dbReference>
<dbReference type="FunFam" id="4.10.950.10:FF:000001">
    <property type="entry name" value="50S ribosomal protein L2"/>
    <property type="match status" value="1"/>
</dbReference>
<dbReference type="Gene3D" id="2.30.30.30">
    <property type="match status" value="1"/>
</dbReference>
<dbReference type="Gene3D" id="2.40.50.140">
    <property type="entry name" value="Nucleic acid-binding proteins"/>
    <property type="match status" value="1"/>
</dbReference>
<dbReference type="Gene3D" id="4.10.950.10">
    <property type="entry name" value="Ribosomal protein L2, domain 3"/>
    <property type="match status" value="1"/>
</dbReference>
<dbReference type="HAMAP" id="MF_01320_B">
    <property type="entry name" value="Ribosomal_uL2_B"/>
    <property type="match status" value="1"/>
</dbReference>
<dbReference type="InterPro" id="IPR012340">
    <property type="entry name" value="NA-bd_OB-fold"/>
</dbReference>
<dbReference type="InterPro" id="IPR014722">
    <property type="entry name" value="Rib_uL2_dom2"/>
</dbReference>
<dbReference type="InterPro" id="IPR002171">
    <property type="entry name" value="Ribosomal_uL2"/>
</dbReference>
<dbReference type="InterPro" id="IPR005880">
    <property type="entry name" value="Ribosomal_uL2_bac/org-type"/>
</dbReference>
<dbReference type="InterPro" id="IPR022669">
    <property type="entry name" value="Ribosomal_uL2_C"/>
</dbReference>
<dbReference type="InterPro" id="IPR022671">
    <property type="entry name" value="Ribosomal_uL2_CS"/>
</dbReference>
<dbReference type="InterPro" id="IPR014726">
    <property type="entry name" value="Ribosomal_uL2_dom3"/>
</dbReference>
<dbReference type="InterPro" id="IPR022666">
    <property type="entry name" value="Ribosomal_uL2_RNA-bd_dom"/>
</dbReference>
<dbReference type="InterPro" id="IPR008991">
    <property type="entry name" value="Translation_prot_SH3-like_sf"/>
</dbReference>
<dbReference type="NCBIfam" id="TIGR01171">
    <property type="entry name" value="rplB_bact"/>
    <property type="match status" value="1"/>
</dbReference>
<dbReference type="PANTHER" id="PTHR13691:SF5">
    <property type="entry name" value="LARGE RIBOSOMAL SUBUNIT PROTEIN UL2M"/>
    <property type="match status" value="1"/>
</dbReference>
<dbReference type="PANTHER" id="PTHR13691">
    <property type="entry name" value="RIBOSOMAL PROTEIN L2"/>
    <property type="match status" value="1"/>
</dbReference>
<dbReference type="Pfam" id="PF00181">
    <property type="entry name" value="Ribosomal_L2"/>
    <property type="match status" value="1"/>
</dbReference>
<dbReference type="Pfam" id="PF03947">
    <property type="entry name" value="Ribosomal_L2_C"/>
    <property type="match status" value="1"/>
</dbReference>
<dbReference type="PIRSF" id="PIRSF002158">
    <property type="entry name" value="Ribosomal_L2"/>
    <property type="match status" value="1"/>
</dbReference>
<dbReference type="SMART" id="SM01383">
    <property type="entry name" value="Ribosomal_L2"/>
    <property type="match status" value="1"/>
</dbReference>
<dbReference type="SMART" id="SM01382">
    <property type="entry name" value="Ribosomal_L2_C"/>
    <property type="match status" value="1"/>
</dbReference>
<dbReference type="SUPFAM" id="SSF50249">
    <property type="entry name" value="Nucleic acid-binding proteins"/>
    <property type="match status" value="1"/>
</dbReference>
<dbReference type="SUPFAM" id="SSF50104">
    <property type="entry name" value="Translation proteins SH3-like domain"/>
    <property type="match status" value="1"/>
</dbReference>
<dbReference type="PROSITE" id="PS00467">
    <property type="entry name" value="RIBOSOMAL_L2"/>
    <property type="match status" value="1"/>
</dbReference>